<organism>
    <name type="scientific">Penaeus vannamei</name>
    <name type="common">Whiteleg shrimp</name>
    <name type="synonym">Litopenaeus vannamei</name>
    <dbReference type="NCBI Taxonomy" id="6689"/>
    <lineage>
        <taxon>Eukaryota</taxon>
        <taxon>Metazoa</taxon>
        <taxon>Ecdysozoa</taxon>
        <taxon>Arthropoda</taxon>
        <taxon>Crustacea</taxon>
        <taxon>Multicrustacea</taxon>
        <taxon>Malacostraca</taxon>
        <taxon>Eumalacostraca</taxon>
        <taxon>Eucarida</taxon>
        <taxon>Decapoda</taxon>
        <taxon>Dendrobranchiata</taxon>
        <taxon>Penaeoidea</taxon>
        <taxon>Penaeidae</taxon>
        <taxon>Penaeus</taxon>
    </lineage>
</organism>
<name>PEN3F_PENVA</name>
<keyword id="KW-0027">Amidation</keyword>
<keyword id="KW-0044">Antibiotic</keyword>
<keyword id="KW-0929">Antimicrobial</keyword>
<keyword id="KW-0147">Chitin-binding</keyword>
<keyword id="KW-1015">Disulfide bond</keyword>
<keyword id="KW-0295">Fungicide</keyword>
<keyword id="KW-0873">Pyrrolidone carboxylic acid</keyword>
<keyword id="KW-0732">Signal</keyword>
<sequence length="82" mass="8734">MRLVACLVFLASFALVCQGQVYKGGYTRPIPRPPPFVRPLPGGPIGPYNGCPISCRGISFSQARSCCSRLGRCCHVGKGYSG</sequence>
<evidence type="ECO:0000250" key="1"/>
<evidence type="ECO:0000255" key="2"/>
<evidence type="ECO:0000305" key="3"/>
<feature type="signal peptide" evidence="2">
    <location>
        <begin position="1"/>
        <end position="19"/>
    </location>
</feature>
<feature type="chain" id="PRO_0000023511" description="Penaeidin-3f">
    <location>
        <begin position="20"/>
        <end position="81"/>
    </location>
</feature>
<feature type="modified residue" description="Pyrrolidone carboxylic acid" evidence="1">
    <location>
        <position position="20"/>
    </location>
</feature>
<feature type="modified residue" description="Serine amide" evidence="1">
    <location>
        <position position="81"/>
    </location>
</feature>
<feature type="disulfide bond" evidence="1">
    <location>
        <begin position="51"/>
        <end position="66"/>
    </location>
</feature>
<feature type="disulfide bond" evidence="1">
    <location>
        <begin position="55"/>
        <end position="73"/>
    </location>
</feature>
<feature type="disulfide bond" evidence="1">
    <location>
        <begin position="67"/>
        <end position="74"/>
    </location>
</feature>
<dbReference type="EMBL" id="AF390142">
    <property type="protein sequence ID" value="AAK77535.1"/>
    <property type="molecule type" value="mRNA"/>
</dbReference>
<dbReference type="SMR" id="Q963C8"/>
<dbReference type="GO" id="GO:0005737">
    <property type="term" value="C:cytoplasm"/>
    <property type="evidence" value="ECO:0007669"/>
    <property type="project" value="InterPro"/>
</dbReference>
<dbReference type="GO" id="GO:0008061">
    <property type="term" value="F:chitin binding"/>
    <property type="evidence" value="ECO:0007669"/>
    <property type="project" value="UniProtKB-KW"/>
</dbReference>
<dbReference type="GO" id="GO:0042742">
    <property type="term" value="P:defense response to bacterium"/>
    <property type="evidence" value="ECO:0007669"/>
    <property type="project" value="UniProtKB-KW"/>
</dbReference>
<dbReference type="GO" id="GO:0050832">
    <property type="term" value="P:defense response to fungus"/>
    <property type="evidence" value="ECO:0007669"/>
    <property type="project" value="UniProtKB-KW"/>
</dbReference>
<dbReference type="GO" id="GO:0031640">
    <property type="term" value="P:killing of cells of another organism"/>
    <property type="evidence" value="ECO:0007669"/>
    <property type="project" value="UniProtKB-KW"/>
</dbReference>
<dbReference type="InterPro" id="IPR009226">
    <property type="entry name" value="Penaeidin"/>
</dbReference>
<dbReference type="Pfam" id="PF05927">
    <property type="entry name" value="Penaeidin"/>
    <property type="match status" value="1"/>
</dbReference>
<comment type="function">
    <text evidence="1">Antibacterial and antifungal activity. Presents chitin-binding activity (By similarity).</text>
</comment>
<comment type="subcellular location">
    <subcellularLocation>
        <location>Cytoplasmic granule</location>
    </subcellularLocation>
    <text>Cytoplasmic granules of hemocytes and to a lesser extent in small granules of hemocytes.</text>
</comment>
<comment type="similarity">
    <text evidence="3">Belongs to the penaeidin family.</text>
</comment>
<protein>
    <recommendedName>
        <fullName>Penaeidin-3f</fullName>
        <shortName>Pen-3f</shortName>
    </recommendedName>
</protein>
<accession>Q963C8</accession>
<proteinExistence type="inferred from homology"/>
<reference key="1">
    <citation type="journal article" date="2002" name="Immunogenetics">
        <title>Diversity of the penaeidin antimicrobial peptides in two shrimp species.</title>
        <authorList>
            <person name="Cuthbertson B.J."/>
            <person name="Shepard E.F."/>
            <person name="Chapman R.W."/>
            <person name="Gross P.S."/>
        </authorList>
    </citation>
    <scope>NUCLEOTIDE SEQUENCE [MRNA]</scope>
    <source>
        <tissue>Hemocyte</tissue>
    </source>
</reference>